<feature type="chain" id="PRO_1000202900" description="Shikimate kinase">
    <location>
        <begin position="1"/>
        <end position="170"/>
    </location>
</feature>
<feature type="binding site" evidence="1">
    <location>
        <begin position="11"/>
        <end position="16"/>
    </location>
    <ligand>
        <name>ATP</name>
        <dbReference type="ChEBI" id="CHEBI:30616"/>
    </ligand>
</feature>
<feature type="binding site" evidence="1">
    <location>
        <position position="15"/>
    </location>
    <ligand>
        <name>Mg(2+)</name>
        <dbReference type="ChEBI" id="CHEBI:18420"/>
    </ligand>
</feature>
<feature type="binding site" evidence="1">
    <location>
        <position position="33"/>
    </location>
    <ligand>
        <name>substrate</name>
    </ligand>
</feature>
<feature type="binding site" evidence="1">
    <location>
        <position position="57"/>
    </location>
    <ligand>
        <name>substrate</name>
    </ligand>
</feature>
<feature type="binding site" evidence="1">
    <location>
        <position position="79"/>
    </location>
    <ligand>
        <name>substrate</name>
    </ligand>
</feature>
<feature type="binding site" evidence="1">
    <location>
        <position position="119"/>
    </location>
    <ligand>
        <name>ATP</name>
        <dbReference type="ChEBI" id="CHEBI:30616"/>
    </ligand>
</feature>
<feature type="binding site" evidence="1">
    <location>
        <position position="137"/>
    </location>
    <ligand>
        <name>substrate</name>
    </ligand>
</feature>
<dbReference type="EC" id="2.7.1.71" evidence="1"/>
<dbReference type="EMBL" id="CP001083">
    <property type="protein sequence ID" value="ACQ51532.1"/>
    <property type="molecule type" value="Genomic_DNA"/>
</dbReference>
<dbReference type="RefSeq" id="WP_003362527.1">
    <property type="nucleotide sequence ID" value="NC_012658.1"/>
</dbReference>
<dbReference type="SMR" id="C3KXE0"/>
<dbReference type="KEGG" id="cbi:CLJ_B2086"/>
<dbReference type="HOGENOM" id="CLU_057607_4_0_9"/>
<dbReference type="UniPathway" id="UPA00053">
    <property type="reaction ID" value="UER00088"/>
</dbReference>
<dbReference type="Proteomes" id="UP000002333">
    <property type="component" value="Chromosome"/>
</dbReference>
<dbReference type="GO" id="GO:0005829">
    <property type="term" value="C:cytosol"/>
    <property type="evidence" value="ECO:0007669"/>
    <property type="project" value="TreeGrafter"/>
</dbReference>
<dbReference type="GO" id="GO:0005524">
    <property type="term" value="F:ATP binding"/>
    <property type="evidence" value="ECO:0007669"/>
    <property type="project" value="UniProtKB-UniRule"/>
</dbReference>
<dbReference type="GO" id="GO:0000287">
    <property type="term" value="F:magnesium ion binding"/>
    <property type="evidence" value="ECO:0007669"/>
    <property type="project" value="UniProtKB-UniRule"/>
</dbReference>
<dbReference type="GO" id="GO:0004765">
    <property type="term" value="F:shikimate kinase activity"/>
    <property type="evidence" value="ECO:0007669"/>
    <property type="project" value="UniProtKB-UniRule"/>
</dbReference>
<dbReference type="GO" id="GO:0008652">
    <property type="term" value="P:amino acid biosynthetic process"/>
    <property type="evidence" value="ECO:0007669"/>
    <property type="project" value="UniProtKB-KW"/>
</dbReference>
<dbReference type="GO" id="GO:0009073">
    <property type="term" value="P:aromatic amino acid family biosynthetic process"/>
    <property type="evidence" value="ECO:0007669"/>
    <property type="project" value="UniProtKB-KW"/>
</dbReference>
<dbReference type="GO" id="GO:0009423">
    <property type="term" value="P:chorismate biosynthetic process"/>
    <property type="evidence" value="ECO:0007669"/>
    <property type="project" value="UniProtKB-UniRule"/>
</dbReference>
<dbReference type="CDD" id="cd00464">
    <property type="entry name" value="SK"/>
    <property type="match status" value="1"/>
</dbReference>
<dbReference type="FunFam" id="3.40.50.300:FF:002322">
    <property type="entry name" value="Shikimate kinase"/>
    <property type="match status" value="1"/>
</dbReference>
<dbReference type="Gene3D" id="3.40.50.300">
    <property type="entry name" value="P-loop containing nucleotide triphosphate hydrolases"/>
    <property type="match status" value="1"/>
</dbReference>
<dbReference type="HAMAP" id="MF_00109">
    <property type="entry name" value="Shikimate_kinase"/>
    <property type="match status" value="1"/>
</dbReference>
<dbReference type="InterPro" id="IPR027417">
    <property type="entry name" value="P-loop_NTPase"/>
</dbReference>
<dbReference type="InterPro" id="IPR031322">
    <property type="entry name" value="Shikimate/glucono_kinase"/>
</dbReference>
<dbReference type="InterPro" id="IPR000623">
    <property type="entry name" value="Shikimate_kinase/TSH1"/>
</dbReference>
<dbReference type="PANTHER" id="PTHR21087">
    <property type="entry name" value="SHIKIMATE KINASE"/>
    <property type="match status" value="1"/>
</dbReference>
<dbReference type="PANTHER" id="PTHR21087:SF16">
    <property type="entry name" value="SHIKIMATE KINASE 1, CHLOROPLASTIC"/>
    <property type="match status" value="1"/>
</dbReference>
<dbReference type="Pfam" id="PF01202">
    <property type="entry name" value="SKI"/>
    <property type="match status" value="1"/>
</dbReference>
<dbReference type="PRINTS" id="PR01100">
    <property type="entry name" value="SHIKIMTKNASE"/>
</dbReference>
<dbReference type="SUPFAM" id="SSF52540">
    <property type="entry name" value="P-loop containing nucleoside triphosphate hydrolases"/>
    <property type="match status" value="1"/>
</dbReference>
<name>AROK_CLOB6</name>
<accession>C3KXE0</accession>
<organism>
    <name type="scientific">Clostridium botulinum (strain 657 / Type Ba4)</name>
    <dbReference type="NCBI Taxonomy" id="515621"/>
    <lineage>
        <taxon>Bacteria</taxon>
        <taxon>Bacillati</taxon>
        <taxon>Bacillota</taxon>
        <taxon>Clostridia</taxon>
        <taxon>Eubacteriales</taxon>
        <taxon>Clostridiaceae</taxon>
        <taxon>Clostridium</taxon>
    </lineage>
</organism>
<protein>
    <recommendedName>
        <fullName evidence="1">Shikimate kinase</fullName>
        <shortName evidence="1">SK</shortName>
        <ecNumber evidence="1">2.7.1.71</ecNumber>
    </recommendedName>
</protein>
<reference key="1">
    <citation type="submission" date="2008-05" db="EMBL/GenBank/DDBJ databases">
        <title>Genome sequence of Clostridium botulinum Ba4 strain 657.</title>
        <authorList>
            <person name="Shrivastava S."/>
            <person name="Brown J.L."/>
            <person name="Bruce D."/>
            <person name="Detter C."/>
            <person name="Munk C."/>
            <person name="Smith L.A."/>
            <person name="Smith T.J."/>
            <person name="Sutton G."/>
            <person name="Brettin T.S."/>
        </authorList>
    </citation>
    <scope>NUCLEOTIDE SEQUENCE [LARGE SCALE GENOMIC DNA]</scope>
    <source>
        <strain>657 / Type Ba4</strain>
    </source>
</reference>
<sequence length="170" mass="19878">MENIVLIGMPLSGKSTLGREISKILKYDLIDTDTLIEKMEGKSIKEIFKIYGEDYFREKELEIINKLKKESNKVISTGGGLPIYNKNIYELKKIGFTVYLKVPLEELIKRMVKKGEDTRPLLKNNDTKFLEEMYKNRIEIYEKAHTIICNTNHEESLITIVRAYKKWKGI</sequence>
<evidence type="ECO:0000255" key="1">
    <source>
        <dbReference type="HAMAP-Rule" id="MF_00109"/>
    </source>
</evidence>
<proteinExistence type="inferred from homology"/>
<keyword id="KW-0028">Amino-acid biosynthesis</keyword>
<keyword id="KW-0057">Aromatic amino acid biosynthesis</keyword>
<keyword id="KW-0067">ATP-binding</keyword>
<keyword id="KW-0963">Cytoplasm</keyword>
<keyword id="KW-0418">Kinase</keyword>
<keyword id="KW-0460">Magnesium</keyword>
<keyword id="KW-0479">Metal-binding</keyword>
<keyword id="KW-0547">Nucleotide-binding</keyword>
<keyword id="KW-0808">Transferase</keyword>
<comment type="function">
    <text evidence="1">Catalyzes the specific phosphorylation of the 3-hydroxyl group of shikimic acid using ATP as a cosubstrate.</text>
</comment>
<comment type="catalytic activity">
    <reaction evidence="1">
        <text>shikimate + ATP = 3-phosphoshikimate + ADP + H(+)</text>
        <dbReference type="Rhea" id="RHEA:13121"/>
        <dbReference type="ChEBI" id="CHEBI:15378"/>
        <dbReference type="ChEBI" id="CHEBI:30616"/>
        <dbReference type="ChEBI" id="CHEBI:36208"/>
        <dbReference type="ChEBI" id="CHEBI:145989"/>
        <dbReference type="ChEBI" id="CHEBI:456216"/>
        <dbReference type="EC" id="2.7.1.71"/>
    </reaction>
</comment>
<comment type="cofactor">
    <cofactor evidence="1">
        <name>Mg(2+)</name>
        <dbReference type="ChEBI" id="CHEBI:18420"/>
    </cofactor>
    <text evidence="1">Binds 1 Mg(2+) ion per subunit.</text>
</comment>
<comment type="pathway">
    <text evidence="1">Metabolic intermediate biosynthesis; chorismate biosynthesis; chorismate from D-erythrose 4-phosphate and phosphoenolpyruvate: step 5/7.</text>
</comment>
<comment type="subunit">
    <text evidence="1">Monomer.</text>
</comment>
<comment type="subcellular location">
    <subcellularLocation>
        <location evidence="1">Cytoplasm</location>
    </subcellularLocation>
</comment>
<comment type="similarity">
    <text evidence="1">Belongs to the shikimate kinase family.</text>
</comment>
<gene>
    <name evidence="1" type="primary">aroK</name>
    <name type="ordered locus">CLJ_B2086</name>
</gene>